<protein>
    <recommendedName>
        <fullName evidence="1">Histidine--tRNA ligase</fullName>
        <ecNumber evidence="1">6.1.1.21</ecNumber>
    </recommendedName>
    <alternativeName>
        <fullName evidence="1">Histidyl-tRNA synthetase</fullName>
        <shortName evidence="1">HisRS</shortName>
    </alternativeName>
</protein>
<feature type="chain" id="PRO_1000199114" description="Histidine--tRNA ligase">
    <location>
        <begin position="1"/>
        <end position="433"/>
    </location>
</feature>
<accession>A1K3Z0</accession>
<comment type="catalytic activity">
    <reaction evidence="1">
        <text>tRNA(His) + L-histidine + ATP = L-histidyl-tRNA(His) + AMP + diphosphate + H(+)</text>
        <dbReference type="Rhea" id="RHEA:17313"/>
        <dbReference type="Rhea" id="RHEA-COMP:9665"/>
        <dbReference type="Rhea" id="RHEA-COMP:9689"/>
        <dbReference type="ChEBI" id="CHEBI:15378"/>
        <dbReference type="ChEBI" id="CHEBI:30616"/>
        <dbReference type="ChEBI" id="CHEBI:33019"/>
        <dbReference type="ChEBI" id="CHEBI:57595"/>
        <dbReference type="ChEBI" id="CHEBI:78442"/>
        <dbReference type="ChEBI" id="CHEBI:78527"/>
        <dbReference type="ChEBI" id="CHEBI:456215"/>
        <dbReference type="EC" id="6.1.1.21"/>
    </reaction>
</comment>
<comment type="subunit">
    <text evidence="1">Homodimer.</text>
</comment>
<comment type="subcellular location">
    <subcellularLocation>
        <location evidence="1">Cytoplasm</location>
    </subcellularLocation>
</comment>
<comment type="similarity">
    <text evidence="1">Belongs to the class-II aminoacyl-tRNA synthetase family.</text>
</comment>
<sequence>MSQTLQAVRGMNDILPDEAETWEHFEDIVRDWLKSYGYRPIRMPLVEPTPLFKRAIGEVTDIVEKEMYSFEDALNGEHLTLRPEGTASCVRAAIQHNLVAGHGPQRLYYHGPMFRHERPQKGRYRQFHQIGVEALGFAGPDIDAEHIIMCARLWDDLGLEDVSLEINSLGAAEERAQHRAALIAYLEQHRDKLDEDGQRRLYTNPLRILDTKNPDLQPVVEAAPRLADYLGDESRAHFDAVQLFLKDAGIPYRINHRLVRGLDYYNRTVFEWVTTRLGAQGTVCAGGRYDGLVAQLGGKPQPAAGFAMGVERLLALWQESGGEPERQAPDVYVVHLGEAAQRLAFQAAEALRGHGFSAVLHCGGGSFKSQMKKADGSGASIAVVIGEDEAAAGEVGVKPLRGPGGQQRVTLAALAEAVGGVLYSDQGDDDGGV</sequence>
<keyword id="KW-0030">Aminoacyl-tRNA synthetase</keyword>
<keyword id="KW-0067">ATP-binding</keyword>
<keyword id="KW-0963">Cytoplasm</keyword>
<keyword id="KW-0436">Ligase</keyword>
<keyword id="KW-0547">Nucleotide-binding</keyword>
<keyword id="KW-0648">Protein biosynthesis</keyword>
<keyword id="KW-1185">Reference proteome</keyword>
<gene>
    <name evidence="1" type="primary">hisS</name>
    <name type="ordered locus">azo0928</name>
</gene>
<organism>
    <name type="scientific">Azoarcus sp. (strain BH72)</name>
    <dbReference type="NCBI Taxonomy" id="418699"/>
    <lineage>
        <taxon>Bacteria</taxon>
        <taxon>Pseudomonadati</taxon>
        <taxon>Pseudomonadota</taxon>
        <taxon>Betaproteobacteria</taxon>
        <taxon>Rhodocyclales</taxon>
        <taxon>Zoogloeaceae</taxon>
        <taxon>Azoarcus</taxon>
    </lineage>
</organism>
<proteinExistence type="inferred from homology"/>
<reference key="1">
    <citation type="journal article" date="2006" name="Nat. Biotechnol.">
        <title>Complete genome of the mutualistic, N2-fixing grass endophyte Azoarcus sp. strain BH72.</title>
        <authorList>
            <person name="Krause A."/>
            <person name="Ramakumar A."/>
            <person name="Bartels D."/>
            <person name="Battistoni F."/>
            <person name="Bekel T."/>
            <person name="Boch J."/>
            <person name="Boehm M."/>
            <person name="Friedrich F."/>
            <person name="Hurek T."/>
            <person name="Krause L."/>
            <person name="Linke B."/>
            <person name="McHardy A.C."/>
            <person name="Sarkar A."/>
            <person name="Schneiker S."/>
            <person name="Syed A.A."/>
            <person name="Thauer R."/>
            <person name="Vorhoelter F.-J."/>
            <person name="Weidner S."/>
            <person name="Puehler A."/>
            <person name="Reinhold-Hurek B."/>
            <person name="Kaiser O."/>
            <person name="Goesmann A."/>
        </authorList>
    </citation>
    <scope>NUCLEOTIDE SEQUENCE [LARGE SCALE GENOMIC DNA]</scope>
    <source>
        <strain>BH72</strain>
    </source>
</reference>
<name>SYH_AZOSB</name>
<dbReference type="EC" id="6.1.1.21" evidence="1"/>
<dbReference type="EMBL" id="AM406670">
    <property type="protein sequence ID" value="CAL93545.1"/>
    <property type="molecule type" value="Genomic_DNA"/>
</dbReference>
<dbReference type="RefSeq" id="WP_011764662.1">
    <property type="nucleotide sequence ID" value="NC_008702.1"/>
</dbReference>
<dbReference type="SMR" id="A1K3Z0"/>
<dbReference type="STRING" id="62928.azo0928"/>
<dbReference type="KEGG" id="aoa:dqs_1000"/>
<dbReference type="KEGG" id="azo:azo0928"/>
<dbReference type="eggNOG" id="COG0124">
    <property type="taxonomic scope" value="Bacteria"/>
</dbReference>
<dbReference type="HOGENOM" id="CLU_025113_1_0_4"/>
<dbReference type="OrthoDB" id="9800814at2"/>
<dbReference type="Proteomes" id="UP000002588">
    <property type="component" value="Chromosome"/>
</dbReference>
<dbReference type="GO" id="GO:0005737">
    <property type="term" value="C:cytoplasm"/>
    <property type="evidence" value="ECO:0007669"/>
    <property type="project" value="UniProtKB-SubCell"/>
</dbReference>
<dbReference type="GO" id="GO:0005524">
    <property type="term" value="F:ATP binding"/>
    <property type="evidence" value="ECO:0007669"/>
    <property type="project" value="UniProtKB-UniRule"/>
</dbReference>
<dbReference type="GO" id="GO:0004821">
    <property type="term" value="F:histidine-tRNA ligase activity"/>
    <property type="evidence" value="ECO:0007669"/>
    <property type="project" value="UniProtKB-UniRule"/>
</dbReference>
<dbReference type="GO" id="GO:0006427">
    <property type="term" value="P:histidyl-tRNA aminoacylation"/>
    <property type="evidence" value="ECO:0007669"/>
    <property type="project" value="UniProtKB-UniRule"/>
</dbReference>
<dbReference type="CDD" id="cd00773">
    <property type="entry name" value="HisRS-like_core"/>
    <property type="match status" value="1"/>
</dbReference>
<dbReference type="CDD" id="cd00859">
    <property type="entry name" value="HisRS_anticodon"/>
    <property type="match status" value="1"/>
</dbReference>
<dbReference type="FunFam" id="3.30.930.10:FF:000005">
    <property type="entry name" value="Histidine--tRNA ligase"/>
    <property type="match status" value="1"/>
</dbReference>
<dbReference type="Gene3D" id="3.40.50.800">
    <property type="entry name" value="Anticodon-binding domain"/>
    <property type="match status" value="1"/>
</dbReference>
<dbReference type="Gene3D" id="3.30.930.10">
    <property type="entry name" value="Bira Bifunctional Protein, Domain 2"/>
    <property type="match status" value="1"/>
</dbReference>
<dbReference type="HAMAP" id="MF_00127">
    <property type="entry name" value="His_tRNA_synth"/>
    <property type="match status" value="1"/>
</dbReference>
<dbReference type="InterPro" id="IPR006195">
    <property type="entry name" value="aa-tRNA-synth_II"/>
</dbReference>
<dbReference type="InterPro" id="IPR045864">
    <property type="entry name" value="aa-tRNA-synth_II/BPL/LPL"/>
</dbReference>
<dbReference type="InterPro" id="IPR004154">
    <property type="entry name" value="Anticodon-bd"/>
</dbReference>
<dbReference type="InterPro" id="IPR036621">
    <property type="entry name" value="Anticodon-bd_dom_sf"/>
</dbReference>
<dbReference type="InterPro" id="IPR015807">
    <property type="entry name" value="His-tRNA-ligase"/>
</dbReference>
<dbReference type="InterPro" id="IPR041715">
    <property type="entry name" value="HisRS-like_core"/>
</dbReference>
<dbReference type="InterPro" id="IPR004516">
    <property type="entry name" value="HisRS/HisZ"/>
</dbReference>
<dbReference type="InterPro" id="IPR033656">
    <property type="entry name" value="HisRS_anticodon"/>
</dbReference>
<dbReference type="NCBIfam" id="TIGR00442">
    <property type="entry name" value="hisS"/>
    <property type="match status" value="1"/>
</dbReference>
<dbReference type="PANTHER" id="PTHR43707:SF1">
    <property type="entry name" value="HISTIDINE--TRNA LIGASE, MITOCHONDRIAL-RELATED"/>
    <property type="match status" value="1"/>
</dbReference>
<dbReference type="PANTHER" id="PTHR43707">
    <property type="entry name" value="HISTIDYL-TRNA SYNTHETASE"/>
    <property type="match status" value="1"/>
</dbReference>
<dbReference type="Pfam" id="PF03129">
    <property type="entry name" value="HGTP_anticodon"/>
    <property type="match status" value="1"/>
</dbReference>
<dbReference type="Pfam" id="PF13393">
    <property type="entry name" value="tRNA-synt_His"/>
    <property type="match status" value="1"/>
</dbReference>
<dbReference type="PIRSF" id="PIRSF001549">
    <property type="entry name" value="His-tRNA_synth"/>
    <property type="match status" value="1"/>
</dbReference>
<dbReference type="SUPFAM" id="SSF52954">
    <property type="entry name" value="Class II aaRS ABD-related"/>
    <property type="match status" value="1"/>
</dbReference>
<dbReference type="SUPFAM" id="SSF55681">
    <property type="entry name" value="Class II aaRS and biotin synthetases"/>
    <property type="match status" value="1"/>
</dbReference>
<dbReference type="PROSITE" id="PS50862">
    <property type="entry name" value="AA_TRNA_LIGASE_II"/>
    <property type="match status" value="1"/>
</dbReference>
<evidence type="ECO:0000255" key="1">
    <source>
        <dbReference type="HAMAP-Rule" id="MF_00127"/>
    </source>
</evidence>